<gene>
    <name evidence="1" type="primary">rplM</name>
    <name type="ordered locus">Xfasm12_0876</name>
</gene>
<comment type="function">
    <text evidence="1">This protein is one of the early assembly proteins of the 50S ribosomal subunit, although it is not seen to bind rRNA by itself. It is important during the early stages of 50S assembly.</text>
</comment>
<comment type="subunit">
    <text evidence="1">Part of the 50S ribosomal subunit.</text>
</comment>
<comment type="similarity">
    <text evidence="1">Belongs to the universal ribosomal protein uL13 family.</text>
</comment>
<proteinExistence type="inferred from homology"/>
<dbReference type="EMBL" id="CP000941">
    <property type="protein sequence ID" value="ACA11862.1"/>
    <property type="molecule type" value="Genomic_DNA"/>
</dbReference>
<dbReference type="RefSeq" id="WP_004083669.1">
    <property type="nucleotide sequence ID" value="NC_010513.1"/>
</dbReference>
<dbReference type="SMR" id="B0U6Z6"/>
<dbReference type="GeneID" id="93904531"/>
<dbReference type="KEGG" id="xfm:Xfasm12_0876"/>
<dbReference type="HOGENOM" id="CLU_082184_2_2_6"/>
<dbReference type="GO" id="GO:0022625">
    <property type="term" value="C:cytosolic large ribosomal subunit"/>
    <property type="evidence" value="ECO:0007669"/>
    <property type="project" value="TreeGrafter"/>
</dbReference>
<dbReference type="GO" id="GO:0003729">
    <property type="term" value="F:mRNA binding"/>
    <property type="evidence" value="ECO:0007669"/>
    <property type="project" value="TreeGrafter"/>
</dbReference>
<dbReference type="GO" id="GO:0003735">
    <property type="term" value="F:structural constituent of ribosome"/>
    <property type="evidence" value="ECO:0007669"/>
    <property type="project" value="InterPro"/>
</dbReference>
<dbReference type="GO" id="GO:0017148">
    <property type="term" value="P:negative regulation of translation"/>
    <property type="evidence" value="ECO:0007669"/>
    <property type="project" value="TreeGrafter"/>
</dbReference>
<dbReference type="GO" id="GO:0006412">
    <property type="term" value="P:translation"/>
    <property type="evidence" value="ECO:0007669"/>
    <property type="project" value="UniProtKB-UniRule"/>
</dbReference>
<dbReference type="CDD" id="cd00392">
    <property type="entry name" value="Ribosomal_L13"/>
    <property type="match status" value="1"/>
</dbReference>
<dbReference type="FunFam" id="3.90.1180.10:FF:000001">
    <property type="entry name" value="50S ribosomal protein L13"/>
    <property type="match status" value="1"/>
</dbReference>
<dbReference type="Gene3D" id="3.90.1180.10">
    <property type="entry name" value="Ribosomal protein L13"/>
    <property type="match status" value="1"/>
</dbReference>
<dbReference type="HAMAP" id="MF_01366">
    <property type="entry name" value="Ribosomal_uL13"/>
    <property type="match status" value="1"/>
</dbReference>
<dbReference type="InterPro" id="IPR005822">
    <property type="entry name" value="Ribosomal_uL13"/>
</dbReference>
<dbReference type="InterPro" id="IPR005823">
    <property type="entry name" value="Ribosomal_uL13_bac-type"/>
</dbReference>
<dbReference type="InterPro" id="IPR023563">
    <property type="entry name" value="Ribosomal_uL13_CS"/>
</dbReference>
<dbReference type="InterPro" id="IPR036899">
    <property type="entry name" value="Ribosomal_uL13_sf"/>
</dbReference>
<dbReference type="NCBIfam" id="TIGR01066">
    <property type="entry name" value="rplM_bact"/>
    <property type="match status" value="1"/>
</dbReference>
<dbReference type="PANTHER" id="PTHR11545:SF2">
    <property type="entry name" value="LARGE RIBOSOMAL SUBUNIT PROTEIN UL13M"/>
    <property type="match status" value="1"/>
</dbReference>
<dbReference type="PANTHER" id="PTHR11545">
    <property type="entry name" value="RIBOSOMAL PROTEIN L13"/>
    <property type="match status" value="1"/>
</dbReference>
<dbReference type="Pfam" id="PF00572">
    <property type="entry name" value="Ribosomal_L13"/>
    <property type="match status" value="1"/>
</dbReference>
<dbReference type="PIRSF" id="PIRSF002181">
    <property type="entry name" value="Ribosomal_L13"/>
    <property type="match status" value="1"/>
</dbReference>
<dbReference type="SUPFAM" id="SSF52161">
    <property type="entry name" value="Ribosomal protein L13"/>
    <property type="match status" value="1"/>
</dbReference>
<dbReference type="PROSITE" id="PS00783">
    <property type="entry name" value="RIBOSOMAL_L13"/>
    <property type="match status" value="1"/>
</dbReference>
<evidence type="ECO:0000255" key="1">
    <source>
        <dbReference type="HAMAP-Rule" id="MF_01366"/>
    </source>
</evidence>
<evidence type="ECO:0000305" key="2"/>
<sequence>MTTFTAKNETVQRDWYLVDAEGKTLGRLATELARRLLGKTKPVYTPHVDTGDYLVVINAEKVVVTGKKLTDKYYHRFTGYVGNLKSESLGQALQRHPERVLEIAVKGMLPKGPLGRAMYRKLKVYTGSKHPHTAQQPQVLDI</sequence>
<reference key="1">
    <citation type="journal article" date="2010" name="J. Bacteriol.">
        <title>Whole genome sequences of two Xylella fastidiosa strains (M12 and M23) causing almond leaf scorch disease in California.</title>
        <authorList>
            <person name="Chen J."/>
            <person name="Xie G."/>
            <person name="Han S."/>
            <person name="Chertkov O."/>
            <person name="Sims D."/>
            <person name="Civerolo E.L."/>
        </authorList>
    </citation>
    <scope>NUCLEOTIDE SEQUENCE [LARGE SCALE GENOMIC DNA]</scope>
    <source>
        <strain>M12</strain>
    </source>
</reference>
<organism>
    <name type="scientific">Xylella fastidiosa (strain M12)</name>
    <dbReference type="NCBI Taxonomy" id="405440"/>
    <lineage>
        <taxon>Bacteria</taxon>
        <taxon>Pseudomonadati</taxon>
        <taxon>Pseudomonadota</taxon>
        <taxon>Gammaproteobacteria</taxon>
        <taxon>Lysobacterales</taxon>
        <taxon>Lysobacteraceae</taxon>
        <taxon>Xylella</taxon>
    </lineage>
</organism>
<name>RL13_XYLFM</name>
<keyword id="KW-0687">Ribonucleoprotein</keyword>
<keyword id="KW-0689">Ribosomal protein</keyword>
<accession>B0U6Z6</accession>
<protein>
    <recommendedName>
        <fullName evidence="1">Large ribosomal subunit protein uL13</fullName>
    </recommendedName>
    <alternativeName>
        <fullName evidence="2">50S ribosomal protein L13</fullName>
    </alternativeName>
</protein>
<feature type="chain" id="PRO_1000144201" description="Large ribosomal subunit protein uL13">
    <location>
        <begin position="1"/>
        <end position="142"/>
    </location>
</feature>